<dbReference type="EMBL" id="CU928174">
    <property type="protein sequence ID" value="CAR26462.1"/>
    <property type="molecule type" value="Genomic_DNA"/>
</dbReference>
<dbReference type="RefSeq" id="XP_002495395.1">
    <property type="nucleotide sequence ID" value="XM_002495350.1"/>
</dbReference>
<dbReference type="PDB" id="5YK6">
    <property type="method" value="X-ray"/>
    <property type="resolution" value="2.80 A"/>
    <property type="chains" value="A=190-444"/>
</dbReference>
<dbReference type="PDB" id="5YK7">
    <property type="method" value="X-ray"/>
    <property type="resolution" value="3.80 A"/>
    <property type="chains" value="A/C=190-444"/>
</dbReference>
<dbReference type="PDBsum" id="5YK6"/>
<dbReference type="PDBsum" id="5YK7"/>
<dbReference type="SMR" id="C5DRQ1"/>
<dbReference type="FunCoup" id="C5DRQ1">
    <property type="interactions" value="99"/>
</dbReference>
<dbReference type="STRING" id="559307.C5DRQ1"/>
<dbReference type="GeneID" id="8202550"/>
<dbReference type="KEGG" id="zro:ZYRO0B10274g"/>
<dbReference type="HOGENOM" id="CLU_032730_2_0_1"/>
<dbReference type="InParanoid" id="C5DRQ1"/>
<dbReference type="Proteomes" id="UP000008536">
    <property type="component" value="Chromosome B"/>
</dbReference>
<dbReference type="GO" id="GO:0005789">
    <property type="term" value="C:endoplasmic reticulum membrane"/>
    <property type="evidence" value="ECO:0007669"/>
    <property type="project" value="UniProtKB-SubCell"/>
</dbReference>
<dbReference type="GO" id="GO:0032865">
    <property type="term" value="C:ERMES complex"/>
    <property type="evidence" value="ECO:0007669"/>
    <property type="project" value="UniProtKB-UniRule"/>
</dbReference>
<dbReference type="GO" id="GO:0008289">
    <property type="term" value="F:lipid binding"/>
    <property type="evidence" value="ECO:0007669"/>
    <property type="project" value="UniProtKB-KW"/>
</dbReference>
<dbReference type="GO" id="GO:0006869">
    <property type="term" value="P:lipid transport"/>
    <property type="evidence" value="ECO:0007669"/>
    <property type="project" value="UniProtKB-KW"/>
</dbReference>
<dbReference type="GO" id="GO:0000002">
    <property type="term" value="P:mitochondrial genome maintenance"/>
    <property type="evidence" value="ECO:0007669"/>
    <property type="project" value="UniProtKB-UniRule"/>
</dbReference>
<dbReference type="GO" id="GO:0045040">
    <property type="term" value="P:protein insertion into mitochondrial outer membrane"/>
    <property type="evidence" value="ECO:0007669"/>
    <property type="project" value="UniProtKB-UniRule"/>
</dbReference>
<dbReference type="CDD" id="cd21671">
    <property type="entry name" value="SMP_Mmm1"/>
    <property type="match status" value="1"/>
</dbReference>
<dbReference type="HAMAP" id="MF_03103">
    <property type="entry name" value="Mmm1"/>
    <property type="match status" value="1"/>
</dbReference>
<dbReference type="InterPro" id="IPR027537">
    <property type="entry name" value="Mmm1"/>
</dbReference>
<dbReference type="InterPro" id="IPR019411">
    <property type="entry name" value="MMM1_dom"/>
</dbReference>
<dbReference type="InterPro" id="IPR031468">
    <property type="entry name" value="SMP_LBD"/>
</dbReference>
<dbReference type="PANTHER" id="PTHR13466:SF0">
    <property type="entry name" value="SMP-LTD DOMAIN-CONTAINING PROTEIN"/>
    <property type="match status" value="1"/>
</dbReference>
<dbReference type="PANTHER" id="PTHR13466">
    <property type="entry name" value="TEX2 PROTEIN-RELATED"/>
    <property type="match status" value="1"/>
</dbReference>
<dbReference type="Pfam" id="PF10296">
    <property type="entry name" value="MMM1"/>
    <property type="match status" value="1"/>
</dbReference>
<dbReference type="PROSITE" id="PS51847">
    <property type="entry name" value="SMP"/>
    <property type="match status" value="1"/>
</dbReference>
<gene>
    <name evidence="1" type="primary">MMM1</name>
    <name type="ordered locus">ZYRO0B10274g</name>
</gene>
<protein>
    <recommendedName>
        <fullName evidence="1">Maintenance of mitochondrial morphology protein 1</fullName>
    </recommendedName>
</protein>
<sequence length="454" mass="51378">MESNYTGMDGNWALNGTVSVGNGTLISVDEFLHNALPMHLQALFQDGNSQGPLLTMEDLEKAIEFKRASQELVNDNVLAPDGLFVELLRQQEKTLPRLISATSNTQGSFSSWSFAQGLIVGQVSVVLVLIFFIKFFIFSDSSTKTNPNPAKNSSSTNSLSGLSSESRSFISPHFFTSIMNRKGNEQAESNDDENERSRQIDDILEKTYYNVDTHPAESLDWFNVLIGQTIQQLREEAWKKDNIVYSLNAFIERKAQELPSYLDSIKITELDIGHDFPIFSNCRIQYSPNSNGRKLEAKIDIDLNDRLAVGIETRLLLNYPKPLTASLPINVTVSIIRFQACLTVSLTKAEEFVPTSPESVDEDDNDGYFLMFSFAPEYRMEFETQSLIGARSKLENIPKIGSLVEYQIKKWFVERCVEPRFQFIKLPSVWPRSKNTREGKADVDESEPGRETHY</sequence>
<organism>
    <name type="scientific">Zygosaccharomyces rouxii (strain ATCC 2623 / CBS 732 / NBRC 1130 / NCYC 568 / NRRL Y-229)</name>
    <dbReference type="NCBI Taxonomy" id="559307"/>
    <lineage>
        <taxon>Eukaryota</taxon>
        <taxon>Fungi</taxon>
        <taxon>Dikarya</taxon>
        <taxon>Ascomycota</taxon>
        <taxon>Saccharomycotina</taxon>
        <taxon>Saccharomycetes</taxon>
        <taxon>Saccharomycetales</taxon>
        <taxon>Saccharomycetaceae</taxon>
        <taxon>Zygosaccharomyces</taxon>
    </lineage>
</organism>
<proteinExistence type="evidence at protein level"/>
<keyword id="KW-0002">3D-structure</keyword>
<keyword id="KW-0256">Endoplasmic reticulum</keyword>
<keyword id="KW-0445">Lipid transport</keyword>
<keyword id="KW-0446">Lipid-binding</keyword>
<keyword id="KW-0472">Membrane</keyword>
<keyword id="KW-1185">Reference proteome</keyword>
<keyword id="KW-0812">Transmembrane</keyword>
<keyword id="KW-1133">Transmembrane helix</keyword>
<keyword id="KW-0813">Transport</keyword>
<feature type="chain" id="PRO_0000384262" description="Maintenance of mitochondrial morphology protein 1">
    <location>
        <begin position="1"/>
        <end position="454"/>
    </location>
</feature>
<feature type="topological domain" description="Lumenal" evidence="1">
    <location>
        <begin position="1"/>
        <end position="117"/>
    </location>
</feature>
<feature type="transmembrane region" description="Helical" evidence="1">
    <location>
        <begin position="118"/>
        <end position="138"/>
    </location>
</feature>
<feature type="topological domain" description="Cytoplasmic" evidence="1">
    <location>
        <begin position="139"/>
        <end position="454"/>
    </location>
</feature>
<feature type="domain" description="SMP-LTD" evidence="1">
    <location>
        <begin position="215"/>
        <end position="427"/>
    </location>
</feature>
<feature type="region of interest" description="Disordered" evidence="2">
    <location>
        <begin position="144"/>
        <end position="164"/>
    </location>
</feature>
<feature type="region of interest" description="Disordered" evidence="2">
    <location>
        <begin position="434"/>
        <end position="454"/>
    </location>
</feature>
<feature type="compositionally biased region" description="Low complexity" evidence="2">
    <location>
        <begin position="153"/>
        <end position="164"/>
    </location>
</feature>
<feature type="compositionally biased region" description="Basic and acidic residues" evidence="2">
    <location>
        <begin position="435"/>
        <end position="454"/>
    </location>
</feature>
<feature type="binding site" description="in other chain" evidence="3">
    <location>
        <position position="253"/>
    </location>
    <ligand>
        <name>a 1,2-diacyl-sn-glycero-3-phosphate</name>
        <dbReference type="ChEBI" id="CHEBI:58608"/>
        <note>ligand shared between dimeric partners</note>
    </ligand>
</feature>
<feature type="binding site" description="in other chain" evidence="3">
    <location>
        <position position="411"/>
    </location>
    <ligand>
        <name>a 1,2-diacyl-sn-glycero-3-phosphate</name>
        <dbReference type="ChEBI" id="CHEBI:58608"/>
        <note>ligand shared between dimeric partners</note>
    </ligand>
</feature>
<feature type="binding site" description="in other chain" evidence="3">
    <location>
        <position position="415"/>
    </location>
    <ligand>
        <name>a 1,2-diacyl-sn-glycero-3-phosphate</name>
        <dbReference type="ChEBI" id="CHEBI:58608"/>
        <note>ligand shared between dimeric partners</note>
    </ligand>
</feature>
<feature type="binding site" evidence="3">
    <location>
        <position position="430"/>
    </location>
    <ligand>
        <name>a 1,2-diacyl-sn-glycero-3-phosphate</name>
        <dbReference type="ChEBI" id="CHEBI:58608"/>
        <note>ligand shared between dimeric partners</note>
    </ligand>
</feature>
<feature type="binding site" evidence="3">
    <location>
        <position position="432"/>
    </location>
    <ligand>
        <name>a 1,2-diacyl-sn-glycero-3-phosphate</name>
        <dbReference type="ChEBI" id="CHEBI:58608"/>
        <note>ligand shared between dimeric partners</note>
    </ligand>
</feature>
<feature type="binding site" evidence="3">
    <location>
        <position position="433"/>
    </location>
    <ligand>
        <name>a 1,2-diacyl-sn-glycero-3-phosphate</name>
        <dbReference type="ChEBI" id="CHEBI:58608"/>
        <note>ligand shared between dimeric partners</note>
    </ligand>
</feature>
<feature type="mutagenesis site" description="Impairs the interaction with MDM12." evidence="3">
    <original>L</original>
    <variation>S</variation>
    <location>
        <position position="315"/>
    </location>
</feature>
<feature type="mutagenesis site" description="No effect." evidence="3">
    <original>R</original>
    <variation>E</variation>
    <location>
        <position position="379"/>
    </location>
</feature>
<feature type="mutagenesis site" description="Completely loses the ability to bind phospholipids." evidence="3">
    <original>W</original>
    <variation>A</variation>
    <location>
        <position position="411"/>
    </location>
</feature>
<feature type="mutagenesis site" description="Completely loses the ability to bind phospholipids and partially impairs dimer formation." evidence="3">
    <original>R</original>
    <variation>E</variation>
    <location>
        <position position="415"/>
    </location>
</feature>
<feature type="mutagenesis site" description="Completely loses the ability to bind phospholipids and partially impairs dimer formation." evidence="3">
    <original>W</original>
    <variation>A</variation>
    <location>
        <position position="430"/>
    </location>
</feature>
<feature type="helix" evidence="4">
    <location>
        <begin position="196"/>
        <end position="206"/>
    </location>
</feature>
<feature type="strand" evidence="4">
    <location>
        <begin position="211"/>
        <end position="214"/>
    </location>
</feature>
<feature type="helix" evidence="4">
    <location>
        <begin position="220"/>
        <end position="235"/>
    </location>
</feature>
<feature type="helix" evidence="4">
    <location>
        <begin position="239"/>
        <end position="253"/>
    </location>
</feature>
<feature type="helix" evidence="4">
    <location>
        <begin position="255"/>
        <end position="257"/>
    </location>
</feature>
<feature type="strand" evidence="4">
    <location>
        <begin position="262"/>
        <end position="271"/>
    </location>
</feature>
<feature type="strand" evidence="4">
    <location>
        <begin position="278"/>
        <end position="286"/>
    </location>
</feature>
<feature type="strand" evidence="4">
    <location>
        <begin position="295"/>
        <end position="303"/>
    </location>
</feature>
<feature type="strand" evidence="4">
    <location>
        <begin position="307"/>
        <end position="317"/>
    </location>
</feature>
<feature type="strand" evidence="4">
    <location>
        <begin position="319"/>
        <end position="321"/>
    </location>
</feature>
<feature type="strand" evidence="4">
    <location>
        <begin position="329"/>
        <end position="347"/>
    </location>
</feature>
<feature type="strand" evidence="4">
    <location>
        <begin position="350"/>
        <end position="352"/>
    </location>
</feature>
<feature type="strand" evidence="4">
    <location>
        <begin position="369"/>
        <end position="374"/>
    </location>
</feature>
<feature type="strand" evidence="4">
    <location>
        <begin position="379"/>
        <end position="391"/>
    </location>
</feature>
<feature type="helix" evidence="4">
    <location>
        <begin position="397"/>
        <end position="416"/>
    </location>
</feature>
<feature type="strand" evidence="4">
    <location>
        <begin position="422"/>
        <end position="425"/>
    </location>
</feature>
<feature type="helix" evidence="4">
    <location>
        <begin position="433"/>
        <end position="435"/>
    </location>
</feature>
<evidence type="ECO:0000255" key="1">
    <source>
        <dbReference type="HAMAP-Rule" id="MF_03103"/>
    </source>
</evidence>
<evidence type="ECO:0000256" key="2">
    <source>
        <dbReference type="SAM" id="MobiDB-lite"/>
    </source>
</evidence>
<evidence type="ECO:0000269" key="3">
    <source>
    </source>
</evidence>
<evidence type="ECO:0007829" key="4">
    <source>
        <dbReference type="PDB" id="5YK6"/>
    </source>
</evidence>
<comment type="function">
    <text evidence="1 3">Component of the ERMES/MDM complex, which serves as a molecular tether to connect the endoplasmic reticulum (ER) and mitochondria. Components of this complex are involved in the control of mitochondrial shape and protein biogenesis, and function in nonvesicular lipid trafficking between the ER and mitochondria (By similarity). Preferentially binds to glycerophospholipids such as phosphatidylcholoine (PC), phosphatidic acid (PA), phosphatidylglycerol (PG), and phosphatidylserine (PS), but not to phosphatidylethanolamine (PE) (PubMed:29078410). The MDM12-MMM1 subcomplex functions in the major beta-barrel assembly pathway that is responsible for biogenesis of all outer membrane beta-barrel proteins, and acts in a late step after the SAM complex. The MDM10-MDM12-MMM1 subcomplex further acts in the TOM40-specific pathway after the action of the MDM12-MMM1 complex. Essential for establishing and maintaining the structure of mitochondria and maintenance of mtDNA nucleoids (By similarity).</text>
</comment>
<comment type="subunit">
    <text evidence="1 3">Homodimer (PubMed:29078410). Component of the ER-mitochondria encounter structure (ERMES) or MDM complex, composed of MMM1, MDM10, MDM12 and MDM34 (By similarity). A MMM1 homodimer associates with one molecule of MDM12 on each side in a pairwise head-to-tail manner, and the SMP-LTD domains of MMM1 and MDM12 generate a continuous hydrophobic tunnel for phospholipid trafficking (PubMed:29078410).</text>
</comment>
<comment type="subcellular location">
    <subcellularLocation>
        <location evidence="1">Endoplasmic reticulum membrane</location>
        <topology evidence="1">Single-pass type I membrane protein</topology>
    </subcellularLocation>
    <text evidence="1">The ERMES/MDM complex localizes to a few discrete foci (around 10 per single cell), that represent mitochondria-endoplasmic reticulum junctions. These foci are often found next to mtDNA nucleoids.</text>
</comment>
<comment type="domain">
    <text evidence="1">The SMP-LTD domain is a barrel-like domain that can bind various types of glycerophospholipids in its interior and mediate their transfer between two adjacent bilayers.</text>
</comment>
<comment type="similarity">
    <text evidence="1">Belongs to the MMM1 family.</text>
</comment>
<name>MMM1_ZYGRC</name>
<reference key="1">
    <citation type="journal article" date="2009" name="Genome Res.">
        <title>Comparative genomics of protoploid Saccharomycetaceae.</title>
        <authorList>
            <consortium name="The Genolevures Consortium"/>
            <person name="Souciet J.-L."/>
            <person name="Dujon B."/>
            <person name="Gaillardin C."/>
            <person name="Johnston M."/>
            <person name="Baret P.V."/>
            <person name="Cliften P."/>
            <person name="Sherman D.J."/>
            <person name="Weissenbach J."/>
            <person name="Westhof E."/>
            <person name="Wincker P."/>
            <person name="Jubin C."/>
            <person name="Poulain J."/>
            <person name="Barbe V."/>
            <person name="Segurens B."/>
            <person name="Artiguenave F."/>
            <person name="Anthouard V."/>
            <person name="Vacherie B."/>
            <person name="Val M.-E."/>
            <person name="Fulton R.S."/>
            <person name="Minx P."/>
            <person name="Wilson R."/>
            <person name="Durrens P."/>
            <person name="Jean G."/>
            <person name="Marck C."/>
            <person name="Martin T."/>
            <person name="Nikolski M."/>
            <person name="Rolland T."/>
            <person name="Seret M.-L."/>
            <person name="Casaregola S."/>
            <person name="Despons L."/>
            <person name="Fairhead C."/>
            <person name="Fischer G."/>
            <person name="Lafontaine I."/>
            <person name="Leh V."/>
            <person name="Lemaire M."/>
            <person name="de Montigny J."/>
            <person name="Neuveglise C."/>
            <person name="Thierry A."/>
            <person name="Blanc-Lenfle I."/>
            <person name="Bleykasten C."/>
            <person name="Diffels J."/>
            <person name="Fritsch E."/>
            <person name="Frangeul L."/>
            <person name="Goeffon A."/>
            <person name="Jauniaux N."/>
            <person name="Kachouri-Lafond R."/>
            <person name="Payen C."/>
            <person name="Potier S."/>
            <person name="Pribylova L."/>
            <person name="Ozanne C."/>
            <person name="Richard G.-F."/>
            <person name="Sacerdot C."/>
            <person name="Straub M.-L."/>
            <person name="Talla E."/>
        </authorList>
    </citation>
    <scope>NUCLEOTIDE SEQUENCE [LARGE SCALE GENOMIC DNA]</scope>
    <source>
        <strain>ATCC 2623 / CBS 732 / BCRC 21506 / NBRC 1130 / NCYC 568 / NRRL Y-229</strain>
    </source>
</reference>
<reference key="2">
    <citation type="journal article" date="2017" name="Proc. Natl. Acad. Sci. U.S.A.">
        <title>Crystal structures of Mmm1 and Mdm12-Mmm1 reveal mechanistic insight into phospholipid trafficking at ER-mitochondria contact sites.</title>
        <authorList>
            <person name="Jeong H."/>
            <person name="Park J."/>
            <person name="Jun Y."/>
            <person name="Lee C."/>
        </authorList>
    </citation>
    <scope>X-RAY CRYSTALLOGRAPHY (2.80 ANGSTROMS) OF 190-444 IN COMPLEX WITH PHOSPHATIDIC ACID</scope>
    <scope>SUBUNIT</scope>
    <scope>MUTAGENESIS OF LEU-315; ARG-379; TRP-411; ARG-415 AND TRP-430</scope>
</reference>
<accession>C5DRQ1</accession>